<keyword id="KW-1003">Cell membrane</keyword>
<keyword id="KW-0472">Membrane</keyword>
<keyword id="KW-0653">Protein transport</keyword>
<keyword id="KW-1185">Reference proteome</keyword>
<keyword id="KW-0811">Translocation</keyword>
<keyword id="KW-0812">Transmembrane</keyword>
<keyword id="KW-1133">Transmembrane helix</keyword>
<keyword id="KW-0813">Transport</keyword>
<feature type="chain" id="PRO_0000301164" description="Sec-independent protein translocase protein TatB">
    <location>
        <begin position="1"/>
        <end position="195"/>
    </location>
</feature>
<feature type="transmembrane region" description="Helical" evidence="1">
    <location>
        <begin position="2"/>
        <end position="22"/>
    </location>
</feature>
<feature type="region of interest" description="Disordered" evidence="2">
    <location>
        <begin position="103"/>
        <end position="195"/>
    </location>
</feature>
<feature type="compositionally biased region" description="Basic and acidic residues" evidence="2">
    <location>
        <begin position="103"/>
        <end position="125"/>
    </location>
</feature>
<feature type="compositionally biased region" description="Polar residues" evidence="2">
    <location>
        <begin position="127"/>
        <end position="139"/>
    </location>
</feature>
<feature type="compositionally biased region" description="Polar residues" evidence="2">
    <location>
        <begin position="146"/>
        <end position="155"/>
    </location>
</feature>
<comment type="function">
    <text evidence="1">Part of the twin-arginine translocation (Tat) system that transports large folded proteins containing a characteristic twin-arginine motif in their signal peptide across membranes. Together with TatC, TatB is part of a receptor directly interacting with Tat signal peptides. TatB may form an oligomeric binding site that transiently accommodates folded Tat precursor proteins before their translocation.</text>
</comment>
<comment type="subunit">
    <text evidence="1">The Tat system comprises two distinct complexes: a TatABC complex, containing multiple copies of TatA, TatB and TatC subunits, and a separate TatA complex, containing only TatA subunits. Substrates initially bind to the TatABC complex, which probably triggers association of the separate TatA complex to form the active translocon.</text>
</comment>
<comment type="subcellular location">
    <subcellularLocation>
        <location evidence="1">Cell membrane</location>
        <topology evidence="1">Single-pass membrane protein</topology>
    </subcellularLocation>
</comment>
<comment type="similarity">
    <text evidence="1">Belongs to the TatB family.</text>
</comment>
<name>TATB_CORJK</name>
<gene>
    <name evidence="1" type="primary">tatB</name>
    <name type="ordered locus">jk1378</name>
</gene>
<accession>Q4JUF6</accession>
<reference key="1">
    <citation type="journal article" date="2005" name="J. Bacteriol.">
        <title>Complete genome sequence and analysis of the multiresistant nosocomial pathogen Corynebacterium jeikeium K411, a lipid-requiring bacterium of the human skin flora.</title>
        <authorList>
            <person name="Tauch A."/>
            <person name="Kaiser O."/>
            <person name="Hain T."/>
            <person name="Goesmann A."/>
            <person name="Weisshaar B."/>
            <person name="Albersmeier A."/>
            <person name="Bekel T."/>
            <person name="Bischoff N."/>
            <person name="Brune I."/>
            <person name="Chakraborty T."/>
            <person name="Kalinowski J."/>
            <person name="Meyer F."/>
            <person name="Rupp O."/>
            <person name="Schneiker S."/>
            <person name="Viehoever P."/>
            <person name="Puehler A."/>
        </authorList>
    </citation>
    <scope>NUCLEOTIDE SEQUENCE [LARGE SCALE GENOMIC DNA]</scope>
    <source>
        <strain>K411</strain>
    </source>
</reference>
<organism>
    <name type="scientific">Corynebacterium jeikeium (strain K411)</name>
    <dbReference type="NCBI Taxonomy" id="306537"/>
    <lineage>
        <taxon>Bacteria</taxon>
        <taxon>Bacillati</taxon>
        <taxon>Actinomycetota</taxon>
        <taxon>Actinomycetes</taxon>
        <taxon>Mycobacteriales</taxon>
        <taxon>Corynebacteriaceae</taxon>
        <taxon>Corynebacterium</taxon>
    </lineage>
</organism>
<dbReference type="EMBL" id="CR931997">
    <property type="protein sequence ID" value="CAI37551.1"/>
    <property type="molecule type" value="Genomic_DNA"/>
</dbReference>
<dbReference type="RefSeq" id="WP_005293079.1">
    <property type="nucleotide sequence ID" value="NC_007164.1"/>
</dbReference>
<dbReference type="SMR" id="Q4JUF6"/>
<dbReference type="STRING" id="306537.jk1378"/>
<dbReference type="GeneID" id="92738958"/>
<dbReference type="KEGG" id="cjk:jk1378"/>
<dbReference type="eggNOG" id="COG1826">
    <property type="taxonomic scope" value="Bacteria"/>
</dbReference>
<dbReference type="HOGENOM" id="CLU_086034_2_0_11"/>
<dbReference type="OrthoDB" id="3267321at2"/>
<dbReference type="Proteomes" id="UP000000545">
    <property type="component" value="Chromosome"/>
</dbReference>
<dbReference type="GO" id="GO:0033281">
    <property type="term" value="C:TAT protein transport complex"/>
    <property type="evidence" value="ECO:0007669"/>
    <property type="project" value="UniProtKB-UniRule"/>
</dbReference>
<dbReference type="GO" id="GO:0008320">
    <property type="term" value="F:protein transmembrane transporter activity"/>
    <property type="evidence" value="ECO:0007669"/>
    <property type="project" value="UniProtKB-UniRule"/>
</dbReference>
<dbReference type="GO" id="GO:0043953">
    <property type="term" value="P:protein transport by the Tat complex"/>
    <property type="evidence" value="ECO:0007669"/>
    <property type="project" value="UniProtKB-UniRule"/>
</dbReference>
<dbReference type="Gene3D" id="1.20.5.3310">
    <property type="match status" value="1"/>
</dbReference>
<dbReference type="HAMAP" id="MF_00237">
    <property type="entry name" value="TatB"/>
    <property type="match status" value="1"/>
</dbReference>
<dbReference type="InterPro" id="IPR018448">
    <property type="entry name" value="TatB"/>
</dbReference>
<dbReference type="NCBIfam" id="NF001212">
    <property type="entry name" value="PRK00182.1"/>
    <property type="match status" value="1"/>
</dbReference>
<dbReference type="PRINTS" id="PR01506">
    <property type="entry name" value="TATBPROTEIN"/>
</dbReference>
<proteinExistence type="inferred from homology"/>
<protein>
    <recommendedName>
        <fullName evidence="1">Sec-independent protein translocase protein TatB</fullName>
    </recommendedName>
</protein>
<evidence type="ECO:0000255" key="1">
    <source>
        <dbReference type="HAMAP-Rule" id="MF_00237"/>
    </source>
</evidence>
<evidence type="ECO:0000256" key="2">
    <source>
        <dbReference type="SAM" id="MobiDB-lite"/>
    </source>
</evidence>
<sequence>MFSNVGWGEVLVLLIVALFLIGPERLPGLIKEVRAMLLAVRNAISQAKEQIDGELGEDFREFSKPLQELNSVRQMGAKGFITKTLLDGDDSFLTSFNETKQDVKDTVDTVRKPNLRESLKADKTKKSAQPQPSLASGSADNGGIAVTQQSNAGESRSSHDSPVADAAEQLTGDVGSASEPKEKPSAPGYGWEDVT</sequence>